<name>RS15_LEIXX</name>
<accession>Q6AFQ4</accession>
<reference key="1">
    <citation type="journal article" date="2004" name="Mol. Plant Microbe Interact.">
        <title>The genome sequence of the Gram-positive sugarcane pathogen Leifsonia xyli subsp. xyli.</title>
        <authorList>
            <person name="Monteiro-Vitorello C.B."/>
            <person name="Camargo L.E.A."/>
            <person name="Van Sluys M.A."/>
            <person name="Kitajima J.P."/>
            <person name="Truffi D."/>
            <person name="do Amaral A.M."/>
            <person name="Harakava R."/>
            <person name="de Oliveira J.C.F."/>
            <person name="Wood D."/>
            <person name="de Oliveira M.C."/>
            <person name="Miyaki C.Y."/>
            <person name="Takita M.A."/>
            <person name="da Silva A.C.R."/>
            <person name="Furlan L.R."/>
            <person name="Carraro D.M."/>
            <person name="Camarotte G."/>
            <person name="Almeida N.F. Jr."/>
            <person name="Carrer H."/>
            <person name="Coutinho L.L."/>
            <person name="El-Dorry H.A."/>
            <person name="Ferro M.I.T."/>
            <person name="Gagliardi P.R."/>
            <person name="Giglioti E."/>
            <person name="Goldman M.H.S."/>
            <person name="Goldman G.H."/>
            <person name="Kimura E.T."/>
            <person name="Ferro E.S."/>
            <person name="Kuramae E.E."/>
            <person name="Lemos E.G.M."/>
            <person name="Lemos M.V.F."/>
            <person name="Mauro S.M.Z."/>
            <person name="Machado M.A."/>
            <person name="Marino C.L."/>
            <person name="Menck C.F."/>
            <person name="Nunes L.R."/>
            <person name="Oliveira R.C."/>
            <person name="Pereira G.G."/>
            <person name="Siqueira W."/>
            <person name="de Souza A.A."/>
            <person name="Tsai S.M."/>
            <person name="Zanca A.S."/>
            <person name="Simpson A.J.G."/>
            <person name="Brumbley S.M."/>
            <person name="Setubal J.C."/>
        </authorList>
    </citation>
    <scope>NUCLEOTIDE SEQUENCE [LARGE SCALE GENOMIC DNA]</scope>
    <source>
        <strain>CTCB07</strain>
    </source>
</reference>
<sequence>MALDAETKKSIIDEYATHPGDTGSPEVQVAILTQRIRDLTEHLKEHKHDHHSRRGLLLLVGQRRRLLGYLADIDISRYRALIERLGLRR</sequence>
<dbReference type="EMBL" id="AE016822">
    <property type="protein sequence ID" value="AAT88791.1"/>
    <property type="molecule type" value="Genomic_DNA"/>
</dbReference>
<dbReference type="RefSeq" id="WP_011185789.1">
    <property type="nucleotide sequence ID" value="NC_006087.1"/>
</dbReference>
<dbReference type="SMR" id="Q6AFQ4"/>
<dbReference type="STRING" id="281090.Lxx08990"/>
<dbReference type="KEGG" id="lxx:Lxx08990"/>
<dbReference type="eggNOG" id="COG0184">
    <property type="taxonomic scope" value="Bacteria"/>
</dbReference>
<dbReference type="HOGENOM" id="CLU_148518_0_0_11"/>
<dbReference type="Proteomes" id="UP000001306">
    <property type="component" value="Chromosome"/>
</dbReference>
<dbReference type="GO" id="GO:0022627">
    <property type="term" value="C:cytosolic small ribosomal subunit"/>
    <property type="evidence" value="ECO:0007669"/>
    <property type="project" value="TreeGrafter"/>
</dbReference>
<dbReference type="GO" id="GO:0019843">
    <property type="term" value="F:rRNA binding"/>
    <property type="evidence" value="ECO:0007669"/>
    <property type="project" value="UniProtKB-UniRule"/>
</dbReference>
<dbReference type="GO" id="GO:0003735">
    <property type="term" value="F:structural constituent of ribosome"/>
    <property type="evidence" value="ECO:0007669"/>
    <property type="project" value="InterPro"/>
</dbReference>
<dbReference type="GO" id="GO:0006412">
    <property type="term" value="P:translation"/>
    <property type="evidence" value="ECO:0007669"/>
    <property type="project" value="UniProtKB-UniRule"/>
</dbReference>
<dbReference type="CDD" id="cd00353">
    <property type="entry name" value="Ribosomal_S15p_S13e"/>
    <property type="match status" value="1"/>
</dbReference>
<dbReference type="FunFam" id="1.10.287.10:FF:000002">
    <property type="entry name" value="30S ribosomal protein S15"/>
    <property type="match status" value="1"/>
</dbReference>
<dbReference type="Gene3D" id="6.10.250.3130">
    <property type="match status" value="1"/>
</dbReference>
<dbReference type="Gene3D" id="1.10.287.10">
    <property type="entry name" value="S15/NS1, RNA-binding"/>
    <property type="match status" value="1"/>
</dbReference>
<dbReference type="HAMAP" id="MF_01343_B">
    <property type="entry name" value="Ribosomal_uS15_B"/>
    <property type="match status" value="1"/>
</dbReference>
<dbReference type="InterPro" id="IPR000589">
    <property type="entry name" value="Ribosomal_uS15"/>
</dbReference>
<dbReference type="InterPro" id="IPR005290">
    <property type="entry name" value="Ribosomal_uS15_bac-type"/>
</dbReference>
<dbReference type="InterPro" id="IPR009068">
    <property type="entry name" value="uS15_NS1_RNA-bd_sf"/>
</dbReference>
<dbReference type="NCBIfam" id="TIGR00952">
    <property type="entry name" value="S15_bact"/>
    <property type="match status" value="1"/>
</dbReference>
<dbReference type="PANTHER" id="PTHR23321">
    <property type="entry name" value="RIBOSOMAL PROTEIN S15, BACTERIAL AND ORGANELLAR"/>
    <property type="match status" value="1"/>
</dbReference>
<dbReference type="PANTHER" id="PTHR23321:SF26">
    <property type="entry name" value="SMALL RIBOSOMAL SUBUNIT PROTEIN US15M"/>
    <property type="match status" value="1"/>
</dbReference>
<dbReference type="Pfam" id="PF00312">
    <property type="entry name" value="Ribosomal_S15"/>
    <property type="match status" value="1"/>
</dbReference>
<dbReference type="SMART" id="SM01387">
    <property type="entry name" value="Ribosomal_S15"/>
    <property type="match status" value="1"/>
</dbReference>
<dbReference type="SUPFAM" id="SSF47060">
    <property type="entry name" value="S15/NS1 RNA-binding domain"/>
    <property type="match status" value="1"/>
</dbReference>
<dbReference type="PROSITE" id="PS00362">
    <property type="entry name" value="RIBOSOMAL_S15"/>
    <property type="match status" value="1"/>
</dbReference>
<evidence type="ECO:0000255" key="1">
    <source>
        <dbReference type="HAMAP-Rule" id="MF_01343"/>
    </source>
</evidence>
<evidence type="ECO:0000305" key="2"/>
<organism>
    <name type="scientific">Leifsonia xyli subsp. xyli (strain CTCB07)</name>
    <dbReference type="NCBI Taxonomy" id="281090"/>
    <lineage>
        <taxon>Bacteria</taxon>
        <taxon>Bacillati</taxon>
        <taxon>Actinomycetota</taxon>
        <taxon>Actinomycetes</taxon>
        <taxon>Micrococcales</taxon>
        <taxon>Microbacteriaceae</taxon>
        <taxon>Leifsonia</taxon>
    </lineage>
</organism>
<comment type="function">
    <text evidence="1">One of the primary rRNA binding proteins, it binds directly to 16S rRNA where it helps nucleate assembly of the platform of the 30S subunit by binding and bridging several RNA helices of the 16S rRNA.</text>
</comment>
<comment type="function">
    <text evidence="1">Forms an intersubunit bridge (bridge B4) with the 23S rRNA of the 50S subunit in the ribosome.</text>
</comment>
<comment type="subunit">
    <text evidence="1">Part of the 30S ribosomal subunit. Forms a bridge to the 50S subunit in the 70S ribosome, contacting the 23S rRNA.</text>
</comment>
<comment type="similarity">
    <text evidence="1">Belongs to the universal ribosomal protein uS15 family.</text>
</comment>
<gene>
    <name evidence="1" type="primary">rpsO</name>
    <name type="ordered locus">Lxx08990</name>
</gene>
<feature type="chain" id="PRO_0000115461" description="Small ribosomal subunit protein uS15">
    <location>
        <begin position="1"/>
        <end position="89"/>
    </location>
</feature>
<proteinExistence type="inferred from homology"/>
<keyword id="KW-1185">Reference proteome</keyword>
<keyword id="KW-0687">Ribonucleoprotein</keyword>
<keyword id="KW-0689">Ribosomal protein</keyword>
<keyword id="KW-0694">RNA-binding</keyword>
<keyword id="KW-0699">rRNA-binding</keyword>
<protein>
    <recommendedName>
        <fullName evidence="1">Small ribosomal subunit protein uS15</fullName>
    </recommendedName>
    <alternativeName>
        <fullName evidence="2">30S ribosomal protein S15</fullName>
    </alternativeName>
</protein>